<reference key="1">
    <citation type="journal article" date="2019" name="Org. Lett.">
        <title>Targeted gene inactivations expose silent cytochalasans in Magnaporthe grisea NI980.</title>
        <authorList>
            <person name="Wang C."/>
            <person name="Hantke V."/>
            <person name="Cox R.J."/>
            <person name="Skellam E."/>
        </authorList>
    </citation>
    <scope>NUCLEOTIDE SEQUENCE [GENOMIC DNA]</scope>
    <scope>FUNCTION</scope>
    <scope>DISRUPTION PHENOTYPE</scope>
    <scope>PATHWAY</scope>
    <source>
        <strain>NI980</strain>
    </source>
</reference>
<reference key="2">
    <citation type="journal article" date="2019" name="Org. Lett.">
        <title>Investigating the function of cryptic cytochalasan cytochrome P450 monooxygenases using combinatorial biosynthesis.</title>
        <authorList>
            <person name="Wang C."/>
            <person name="Becker K."/>
            <person name="Pfuetze S."/>
            <person name="Kuhnert E."/>
            <person name="Stadler M."/>
            <person name="Cox R.J."/>
            <person name="Skellam E."/>
        </authorList>
    </citation>
    <scope>FUNCTION</scope>
</reference>
<reference key="3">
    <citation type="journal article" date="2020" name="Chem. Commun. (Camb.)">
        <title>Evidence for enzyme catalysed intramolecular [4+2] Diels-Alder cyclization during the biosynthesis of pyrichalasin H.</title>
        <authorList>
            <person name="Hantke V."/>
            <person name="Skellam E.J."/>
            <person name="Cox R.J."/>
        </authorList>
    </citation>
    <scope>FUNCTION</scope>
</reference>
<comment type="function">
    <text evidence="3 4 8">Short-chain dehydrogenase/reductase; part of the gene cluster that mediates the biosynthesis of the mycotoxin pyrichalasin H, a tyrosine-derived cytochalasan that inhibits the growth of rice seedlings, but also inhibits lymphocyte capping and actin polymerization and alters cell morphology (Probable) (PubMed:31099577). Pyrichalasin H is indicated as the responsible agent for the genus-specific pathogenicity of M.grisea toward crabgrass (PubMed:31099577). The first step in the pathway is catalyzed by the O-methyltransferase pyiA which methylates free tyrosine to generate the precursor O-methyltyrosine (PubMed:31099577). The hybrid PKS-NRPS pyiS, assisted by the enoyl reductase pyiC, are responsible for fusion of the O-methyltyrosine precursor and the polyketide backbone (PubMed:31099577). The polyketide synthase module (PKS) of pyiS is responsible for the synthesis of the polyketide backbone and the downstream nonribosomal peptide synthetase (NRPS) amidates the carboxyl end of the polyketide with the O-methyltyrosine precursor (PubMed:31099577). As the NRPS A-domain demonstrates substrate tolerance, pyiS can also use phenylalanine, tyrosine and even para-chlorophenylalanine as amino acid precursor, which leads to the production of novel cytochalasans, including halogenated cytochalasans (PubMed:31099577). Because pyiS lacks a designated enoylreductase (ER) domain, the required activity is provided the enoyl reductase pyiC (PubMed:31099577). Reduction by the hydrolyase pyiE leads to 1,5-dihydropyrrolone, which is substrate for dehydration and intra-molecular Diels-Alder cyclization by the Diels-Alderase pyiF to yield the required isoindolone-fused macrocycle (PubMed:32039410). The tailoring cytochrome P450 monooxygenases piyD and piyG catalyze the hydroxylation at C-18 and C-7, respectivily, whereas the short-chain dehydrogenase/reductase pyiH reduces the carbonyl at C-21 in preparation for the transfer of an acetyl group by the acetyltransferase pyiB (PubMed:31099577). These 3 reactions whose order is not clear yet, lead to the production of O-methylpyrichalasin J, a deacetylated pyrichalasin H (PubMed:31099577). Finally, pyiB to converts O-methylpyrichalasin J into the final product pyrichalasin H via acetylation of C-21 (PubMed:31099577).</text>
</comment>
<comment type="pathway">
    <text evidence="7">Mycotoxin biosynthesis.</text>
</comment>
<comment type="disruption phenotype">
    <text evidence="3">Leads to the loss of pyrichalasin H production, but accumulates novel cytochalasans.</text>
</comment>
<comment type="similarity">
    <text evidence="6">Belongs to the short-chain dehydrogenases/reductases (SDR) family.</text>
</comment>
<proteinExistence type="inferred from homology"/>
<sequence>MPNLQGRVAFVTGGNAGIGYHTVVFLAKAGAKVYFGARSASRAEAAVERMYRENPGLLHGQVNWLQVDMASMKSVLAGCDKFRASESKLNILIHNAAHEGREPSNMADSGVQITMQTNHLAVFAMTQELQPMLRTAAAEKDSDVRIVNVSSNAPSLTHSDEWRPDFSDPHGGDIRYPAGQADGFLAAMKRYSVSKMAMNLLTAELQARYDREGVPIMVISVCPGAVYFKPQVDTENVEEMMRQPT</sequence>
<dbReference type="EC" id="1.1.1.-" evidence="7"/>
<dbReference type="EMBL" id="MK801691">
    <property type="protein sequence ID" value="QCS37520.1"/>
    <property type="molecule type" value="Genomic_DNA"/>
</dbReference>
<dbReference type="SMR" id="A0A4P8W851"/>
<dbReference type="Proteomes" id="UP000515153">
    <property type="component" value="Unplaced"/>
</dbReference>
<dbReference type="GO" id="GO:0016491">
    <property type="term" value="F:oxidoreductase activity"/>
    <property type="evidence" value="ECO:0007669"/>
    <property type="project" value="UniProtKB-KW"/>
</dbReference>
<dbReference type="Gene3D" id="3.40.50.720">
    <property type="entry name" value="NAD(P)-binding Rossmann-like Domain"/>
    <property type="match status" value="1"/>
</dbReference>
<dbReference type="InterPro" id="IPR036291">
    <property type="entry name" value="NAD(P)-bd_dom_sf"/>
</dbReference>
<dbReference type="InterPro" id="IPR020904">
    <property type="entry name" value="Sc_DH/Rdtase_CS"/>
</dbReference>
<dbReference type="InterPro" id="IPR002347">
    <property type="entry name" value="SDR_fam"/>
</dbReference>
<dbReference type="PANTHER" id="PTHR24320">
    <property type="entry name" value="RETINOL DEHYDROGENASE"/>
    <property type="match status" value="1"/>
</dbReference>
<dbReference type="PANTHER" id="PTHR24320:SF282">
    <property type="entry name" value="WW DOMAIN-CONTAINING OXIDOREDUCTASE"/>
    <property type="match status" value="1"/>
</dbReference>
<dbReference type="Pfam" id="PF00106">
    <property type="entry name" value="adh_short"/>
    <property type="match status" value="1"/>
</dbReference>
<dbReference type="PRINTS" id="PR00081">
    <property type="entry name" value="GDHRDH"/>
</dbReference>
<dbReference type="SUPFAM" id="SSF51735">
    <property type="entry name" value="NAD(P)-binding Rossmann-fold domains"/>
    <property type="match status" value="1"/>
</dbReference>
<dbReference type="PROSITE" id="PS00061">
    <property type="entry name" value="ADH_SHORT"/>
    <property type="match status" value="1"/>
</dbReference>
<protein>
    <recommendedName>
        <fullName evidence="5">Short-chain dehydrogenase/reductase pyiH</fullName>
        <ecNumber evidence="7">1.1.1.-</ecNumber>
    </recommendedName>
    <alternativeName>
        <fullName evidence="5">Pyrichalasin H biosynthesis cluster protein H</fullName>
    </alternativeName>
</protein>
<name>PYIH_PYRGI</name>
<accession>A0A4P8W851</accession>
<keyword id="KW-0521">NADP</keyword>
<keyword id="KW-0560">Oxidoreductase</keyword>
<keyword id="KW-1185">Reference proteome</keyword>
<feature type="chain" id="PRO_0000449454" description="Short-chain dehydrogenase/reductase pyiH">
    <location>
        <begin position="1"/>
        <end position="245"/>
    </location>
</feature>
<feature type="active site" description="Proton donor" evidence="2">
    <location>
        <position position="150"/>
    </location>
</feature>
<feature type="binding site" evidence="1">
    <location>
        <position position="18"/>
    </location>
    <ligand>
        <name>NADP(+)</name>
        <dbReference type="ChEBI" id="CHEBI:58349"/>
    </ligand>
</feature>
<feature type="binding site" evidence="1">
    <location>
        <position position="42"/>
    </location>
    <ligand>
        <name>NADP(+)</name>
        <dbReference type="ChEBI" id="CHEBI:58349"/>
    </ligand>
</feature>
<feature type="binding site" evidence="1">
    <location>
        <position position="68"/>
    </location>
    <ligand>
        <name>NADP(+)</name>
        <dbReference type="ChEBI" id="CHEBI:58349"/>
    </ligand>
</feature>
<feature type="binding site" evidence="2">
    <location>
        <position position="95"/>
    </location>
    <ligand>
        <name>NADP(+)</name>
        <dbReference type="ChEBI" id="CHEBI:58349"/>
    </ligand>
</feature>
<gene>
    <name evidence="5" type="primary">pyiH</name>
</gene>
<organism>
    <name type="scientific">Pyricularia grisea</name>
    <name type="common">Crabgrass-specific blast fungus</name>
    <name type="synonym">Magnaporthe grisea</name>
    <dbReference type="NCBI Taxonomy" id="148305"/>
    <lineage>
        <taxon>Eukaryota</taxon>
        <taxon>Fungi</taxon>
        <taxon>Dikarya</taxon>
        <taxon>Ascomycota</taxon>
        <taxon>Pezizomycotina</taxon>
        <taxon>Sordariomycetes</taxon>
        <taxon>Sordariomycetidae</taxon>
        <taxon>Magnaporthales</taxon>
        <taxon>Pyriculariaceae</taxon>
        <taxon>Pyricularia</taxon>
    </lineage>
</organism>
<evidence type="ECO:0000250" key="1">
    <source>
        <dbReference type="UniProtKB" id="L0E2Z4"/>
    </source>
</evidence>
<evidence type="ECO:0000250" key="2">
    <source>
        <dbReference type="UniProtKB" id="O93868"/>
    </source>
</evidence>
<evidence type="ECO:0000269" key="3">
    <source>
    </source>
</evidence>
<evidence type="ECO:0000269" key="4">
    <source>
    </source>
</evidence>
<evidence type="ECO:0000303" key="5">
    <source>
    </source>
</evidence>
<evidence type="ECO:0000305" key="6"/>
<evidence type="ECO:0000305" key="7">
    <source>
    </source>
</evidence>
<evidence type="ECO:0000305" key="8">
    <source>
    </source>
</evidence>